<protein>
    <recommendedName>
        <fullName evidence="13 14 15 17 19">Alpha-mammal toxin Ts3</fullName>
    </recommendedName>
    <alternativeName>
        <fullName evidence="17">PT-Mice-alpha NaTx3.1</fullName>
    </alternativeName>
    <alternativeName>
        <fullName evidence="21">Tityustoxin IV</fullName>
        <shortName evidence="21">Ts IV</shortName>
        <shortName evidence="24">TsIV</shortName>
    </alternativeName>
    <alternativeName>
        <fullName evidence="23">Tityustoxin IV-5</fullName>
        <shortName evidence="16 22 23">Toxin IV-5</shortName>
        <shortName evidence="18">TsIV-5</shortName>
    </alternativeName>
    <alternativeName>
        <fullName evidence="19">Ts3(1-64)</fullName>
    </alternativeName>
    <component>
        <recommendedName>
            <fullName evidence="20">Probable cryptide Ts3[1-14]</fullName>
        </recommendedName>
    </component>
</protein>
<organism>
    <name type="scientific">Tityus serrulatus</name>
    <name type="common">Brazilian scorpion</name>
    <dbReference type="NCBI Taxonomy" id="6887"/>
    <lineage>
        <taxon>Eukaryota</taxon>
        <taxon>Metazoa</taxon>
        <taxon>Ecdysozoa</taxon>
        <taxon>Arthropoda</taxon>
        <taxon>Chelicerata</taxon>
        <taxon>Arachnida</taxon>
        <taxon>Scorpiones</taxon>
        <taxon>Buthida</taxon>
        <taxon>Buthoidea</taxon>
        <taxon>Buthidae</taxon>
        <taxon>Tityus</taxon>
    </lineage>
</organism>
<evidence type="ECO:0000250" key="1">
    <source>
        <dbReference type="UniProtKB" id="P01484"/>
    </source>
</evidence>
<evidence type="ECO:0000250" key="2">
    <source>
        <dbReference type="UniProtKB" id="Q9TWR4"/>
    </source>
</evidence>
<evidence type="ECO:0000255" key="3"/>
<evidence type="ECO:0000255" key="4">
    <source>
        <dbReference type="PROSITE-ProRule" id="PRU01210"/>
    </source>
</evidence>
<evidence type="ECO:0000269" key="5">
    <source>
    </source>
</evidence>
<evidence type="ECO:0000269" key="6">
    <source>
    </source>
</evidence>
<evidence type="ECO:0000269" key="7">
    <source>
    </source>
</evidence>
<evidence type="ECO:0000269" key="8">
    <source>
    </source>
</evidence>
<evidence type="ECO:0000269" key="9">
    <source>
    </source>
</evidence>
<evidence type="ECO:0000269" key="10">
    <source>
    </source>
</evidence>
<evidence type="ECO:0000269" key="11">
    <source>
    </source>
</evidence>
<evidence type="ECO:0000269" key="12">
    <source>
    </source>
</evidence>
<evidence type="ECO:0000303" key="13">
    <source>
    </source>
</evidence>
<evidence type="ECO:0000303" key="14">
    <source>
    </source>
</evidence>
<evidence type="ECO:0000303" key="15">
    <source>
    </source>
</evidence>
<evidence type="ECO:0000303" key="16">
    <source>
    </source>
</evidence>
<evidence type="ECO:0000303" key="17">
    <source>
    </source>
</evidence>
<evidence type="ECO:0000303" key="18">
    <source>
    </source>
</evidence>
<evidence type="ECO:0000303" key="19">
    <source>
    </source>
</evidence>
<evidence type="ECO:0000303" key="20">
    <source>
    </source>
</evidence>
<evidence type="ECO:0000303" key="21">
    <source>
    </source>
</evidence>
<evidence type="ECO:0000303" key="22">
    <source>
    </source>
</evidence>
<evidence type="ECO:0000303" key="23">
    <source ref="7"/>
</evidence>
<evidence type="ECO:0000305" key="24"/>
<evidence type="ECO:0000305" key="25">
    <source>
    </source>
</evidence>
<evidence type="ECO:0000305" key="26">
    <source>
    </source>
</evidence>
<evidence type="ECO:0000305" key="27">
    <source ref="7"/>
</evidence>
<evidence type="ECO:0000312" key="28">
    <source>
        <dbReference type="EMBL" id="AAB30413.1"/>
    </source>
</evidence>
<evidence type="ECO:0000312" key="29">
    <source>
        <dbReference type="EMBL" id="AAB37719.2"/>
    </source>
</evidence>
<evidence type="ECO:0000312" key="30">
    <source>
        <dbReference type="EMBL" id="JAW06971.1"/>
    </source>
</evidence>
<evidence type="ECO:0000312" key="31">
    <source>
        <dbReference type="EMBL" id="QPD99043.1"/>
    </source>
</evidence>
<evidence type="ECO:0000312" key="32">
    <source>
        <dbReference type="PDB" id="5CY0"/>
    </source>
</evidence>
<evidence type="ECO:0007829" key="33">
    <source>
        <dbReference type="PDB" id="5CY0"/>
    </source>
</evidence>
<name>SCX3_TITSE</name>
<dbReference type="EMBL" id="GEUW01000074">
    <property type="protein sequence ID" value="JAW06971.1"/>
    <property type="molecule type" value="mRNA"/>
</dbReference>
<dbReference type="EMBL" id="MT450707">
    <property type="protein sequence ID" value="QPD99043.1"/>
    <property type="molecule type" value="mRNA"/>
</dbReference>
<dbReference type="EMBL" id="S69808">
    <property type="protein sequence ID" value="AAB30413.1"/>
    <property type="molecule type" value="mRNA"/>
</dbReference>
<dbReference type="EMBL" id="S82286">
    <property type="protein sequence ID" value="AAB37719.2"/>
    <property type="molecule type" value="Genomic_DNA"/>
</dbReference>
<dbReference type="PIR" id="S43674">
    <property type="entry name" value="NTSR4T"/>
</dbReference>
<dbReference type="PDB" id="5CY0">
    <property type="method" value="X-ray"/>
    <property type="resolution" value="1.93 A"/>
    <property type="chains" value="A=20-83"/>
</dbReference>
<dbReference type="PDBsum" id="5CY0"/>
<dbReference type="SMR" id="P01496"/>
<dbReference type="GO" id="GO:0005576">
    <property type="term" value="C:extracellular region"/>
    <property type="evidence" value="ECO:0007669"/>
    <property type="project" value="UniProtKB-SubCell"/>
</dbReference>
<dbReference type="GO" id="GO:0019871">
    <property type="term" value="F:sodium channel inhibitor activity"/>
    <property type="evidence" value="ECO:0007669"/>
    <property type="project" value="InterPro"/>
</dbReference>
<dbReference type="GO" id="GO:0090729">
    <property type="term" value="F:toxin activity"/>
    <property type="evidence" value="ECO:0007669"/>
    <property type="project" value="UniProtKB-KW"/>
</dbReference>
<dbReference type="GO" id="GO:0006952">
    <property type="term" value="P:defense response"/>
    <property type="evidence" value="ECO:0007669"/>
    <property type="project" value="InterPro"/>
</dbReference>
<dbReference type="CDD" id="cd23106">
    <property type="entry name" value="neurotoxins_LC_scorpion"/>
    <property type="match status" value="1"/>
</dbReference>
<dbReference type="Gene3D" id="3.30.30.10">
    <property type="entry name" value="Knottin, scorpion toxin-like"/>
    <property type="match status" value="1"/>
</dbReference>
<dbReference type="InterPro" id="IPR044062">
    <property type="entry name" value="LCN-type_CS_alpha_beta_dom"/>
</dbReference>
<dbReference type="InterPro" id="IPR003614">
    <property type="entry name" value="Scorpion_toxin-like"/>
</dbReference>
<dbReference type="InterPro" id="IPR036574">
    <property type="entry name" value="Scorpion_toxin-like_sf"/>
</dbReference>
<dbReference type="InterPro" id="IPR018218">
    <property type="entry name" value="Scorpion_toxinL"/>
</dbReference>
<dbReference type="InterPro" id="IPR002061">
    <property type="entry name" value="Scorpion_toxinL/defensin"/>
</dbReference>
<dbReference type="Pfam" id="PF00537">
    <property type="entry name" value="Toxin_3"/>
    <property type="match status" value="1"/>
</dbReference>
<dbReference type="PRINTS" id="PR00285">
    <property type="entry name" value="SCORPNTOXIN"/>
</dbReference>
<dbReference type="SMART" id="SM00505">
    <property type="entry name" value="Knot1"/>
    <property type="match status" value="1"/>
</dbReference>
<dbReference type="SUPFAM" id="SSF57095">
    <property type="entry name" value="Scorpion toxin-like"/>
    <property type="match status" value="1"/>
</dbReference>
<dbReference type="PROSITE" id="PS51863">
    <property type="entry name" value="LCN_CSAB"/>
    <property type="match status" value="1"/>
</dbReference>
<keyword id="KW-0002">3D-structure</keyword>
<keyword id="KW-0027">Amidation</keyword>
<keyword id="KW-0903">Direct protein sequencing</keyword>
<keyword id="KW-1015">Disulfide bond</keyword>
<keyword id="KW-1214">G-protein coupled acetylcholine receptor impairing toxin</keyword>
<keyword id="KW-1213">G-protein coupled receptor impairing toxin</keyword>
<keyword id="KW-0872">Ion channel impairing toxin</keyword>
<keyword id="KW-0528">Neurotoxin</keyword>
<keyword id="KW-0964">Secreted</keyword>
<keyword id="KW-0732">Signal</keyword>
<keyword id="KW-0800">Toxin</keyword>
<keyword id="KW-0738">Voltage-gated sodium channel impairing toxin</keyword>
<reference evidence="30" key="1">
    <citation type="journal article" date="2018" name="PLoS ONE">
        <title>Proteomic endorsed transcriptomic profiles of venom glands from Tityus obscurus and T. serrulatus scorpions.</title>
        <authorList>
            <person name="de Oliveira U.C."/>
            <person name="Nishiyama M.Y. Jr."/>
            <person name="Dos Santos M.B.V."/>
            <person name="Santos-da-Silva A.P."/>
            <person name="Chalkidis H.M."/>
            <person name="Souza-Imberg A."/>
            <person name="Candido D.M."/>
            <person name="Yamanouye N."/>
            <person name="Dorce V.A.C."/>
            <person name="Junqueira-de-Azevedo I.L.M."/>
        </authorList>
    </citation>
    <scope>NUCLEOTIDE SEQUENCE [MRNA]</scope>
    <source>
        <tissue>Telson</tissue>
    </source>
</reference>
<reference evidence="31" key="2">
    <citation type="journal article" date="2021" name="Toxicon">
        <title>Novel components of Tityus serrulatus venom: a transcriptomic approach.</title>
        <authorList>
            <person name="Kalapothakis Y."/>
            <person name="Miranda K."/>
            <person name="Pereira A.H."/>
            <person name="Witt A.S.A."/>
            <person name="Marani C."/>
            <person name="Martins A.P."/>
            <person name="Leal H.G."/>
            <person name="Campos-Junior E."/>
            <person name="Pimenta A.M.C."/>
            <person name="Borges A."/>
            <person name="Chavez-Olortegui C."/>
            <person name="Kalapothakis E."/>
        </authorList>
    </citation>
    <scope>NUCLEOTIDE SEQUENCE [MRNA]</scope>
    <source>
        <tissue>Telson</tissue>
    </source>
</reference>
<reference evidence="28" key="3">
    <citation type="journal article" date="1994" name="FEBS Lett.">
        <title>Biochemical, pharmacological and genomic characterisation of Ts IV, an alpha-toxin from the venom of the South American scorpion Tityus serrulatus.</title>
        <authorList>
            <person name="Martin-Eauclaire M.-F."/>
            <person name="Ceard B."/>
            <person name="Ribeiro A.M."/>
            <person name="Diniz C.R."/>
            <person name="Rochat H."/>
            <person name="Bougis P.E."/>
        </authorList>
    </citation>
    <scope>NUCLEOTIDE SEQUENCE [MRNA] OF 7-86</scope>
    <scope>PROTEIN SEQUENCE OF 20-49</scope>
    <scope>SUBCELLULAR LOCATION</scope>
    <source>
        <tissue>Venom</tissue>
        <tissue>Venom gland</tissue>
    </source>
</reference>
<reference evidence="29" key="4">
    <citation type="journal article" date="1996" name="Toxicon">
        <title>Cloning and characterization of the genomic region encoding toxin IV-5 from the scorpion Tityus serrulatus Lutz and Mello.</title>
        <authorList>
            <person name="Corona M."/>
            <person name="Zurita M."/>
            <person name="Possani L.D."/>
            <person name="Becerril B."/>
        </authorList>
    </citation>
    <scope>NUCLEOTIDE SEQUENCE [GENOMIC DNA] OF 7-86</scope>
</reference>
<reference key="5">
    <citation type="journal article" date="1991" name="J. Biol. Chem.">
        <title>Discharge effect on pancreatic exocrine secretion produced by toxins purified from Tityus serrulatus scorpion venom.</title>
        <authorList>
            <person name="Possani L.D."/>
            <person name="Martin B.M."/>
            <person name="Fletcher M.D."/>
            <person name="Fletcher P.L. Jr."/>
        </authorList>
    </citation>
    <scope>PROTEIN SEQUENCE OF 20-81</scope>
    <scope>SUBCELLULAR LOCATION</scope>
    <source>
        <tissue>Venom</tissue>
    </source>
</reference>
<reference key="6">
    <citation type="journal article" date="2003" name="FASEB J.">
        <title>Sequence and structure-activity relationship of a scorpion venom toxin with nitrergic activity in rabbit corpus cavernosum.</title>
        <authorList>
            <person name="Teixeira C.E."/>
            <person name="Ifa D.R."/>
            <person name="Corso G."/>
            <person name="Santagada V."/>
            <person name="Caliendo G."/>
            <person name="Antunes E."/>
            <person name="De Nucci G."/>
        </authorList>
    </citation>
    <scope>PROTEIN SEQUENCE OF 20-44</scope>
    <scope>FUNCTION</scope>
    <scope>MASS SPECTROMETRY</scope>
    <source>
        <tissue>Venom</tissue>
    </source>
</reference>
<reference key="7">
    <citation type="journal article" date="1982" name="Toxicon">
        <title>N-terminal sequence of toxin IV-5 from the venom of the scorpion Tytius serrulatus.</title>
        <authorList>
            <person name="Possani L.D."/>
            <person name="Martin B.M."/>
            <person name="Mochca-Morales J."/>
            <person name="Svendsen I."/>
        </authorList>
    </citation>
    <scope>PROTEIN SEQUENCE OF 20-49</scope>
    <source>
        <tissue>Venom</tissue>
    </source>
</reference>
<reference key="8">
    <citation type="journal article" date="2017" name="Peptides">
        <title>Moving pieces in a cryptomic puzzle: cryptide from Tityus serrulatus Ts3 Nav toxin as potential agonist of muscarinic receptors.</title>
        <authorList>
            <person name="Rocha-Resende C."/>
            <person name="Leao N.M."/>
            <person name="de Lima M.E."/>
            <person name="Santos R.A."/>
            <person name="Pimenta A.M.C."/>
            <person name="Verano-Braga T."/>
        </authorList>
    </citation>
    <scope>FUNCTION OF THE PROBABLE CRYPTIDE TS3[1-14]</scope>
    <scope>BIOASSAY</scope>
    <scope>SYNTHESIS OF 20-33</scope>
</reference>
<reference key="9">
    <citation type="journal article" date="1989" name="J. Gen. Physiol.">
        <title>Modification of Na channel gating by an alpha scorpion toxin from Tityus serrulatus.</title>
        <authorList>
            <person name="Kirsch G.E."/>
            <person name="Skattebol A."/>
            <person name="Possani L.D."/>
            <person name="Brown A.M."/>
        </authorList>
    </citation>
    <scope>FUNCTION</scope>
    <source>
        <tissue>Venom</tissue>
    </source>
</reference>
<reference key="10">
    <citation type="journal article" date="2004" name="Br. J. Pharmacol.">
        <title>Voltage-dependent displacement of the scorpion toxin Ts3 from sodium channels and its implication on the control of inactivation.</title>
        <authorList>
            <person name="Campos F.V."/>
            <person name="Coronas F.I.V."/>
            <person name="Beirao P.S.L."/>
        </authorList>
    </citation>
    <scope>FUNCTION</scope>
    <source>
        <tissue>Venom</tissue>
    </source>
</reference>
<reference key="11">
    <citation type="journal article" date="2004" name="Toxicon">
        <title>Veratridine modifies the TTX-resistant Na+ channels in rat vagal afferent neurons.</title>
        <authorList>
            <person name="Campos F.V."/>
            <person name="Moreira T.H."/>
            <person name="Beirao P.S.L."/>
            <person name="Cruz J.S."/>
        </authorList>
    </citation>
    <scope>FUNCTION</scope>
</reference>
<reference key="12">
    <citation type="journal article" date="2009" name="Protein Pept. Lett.">
        <title>Tityus serrulatus scorpion venom and toxins: an overview.</title>
        <authorList>
            <person name="Cologna C.T."/>
            <person name="Marcussi S."/>
            <person name="Giglio J.R."/>
            <person name="Soares A.M."/>
            <person name="Arantes E.C."/>
        </authorList>
    </citation>
    <scope>NOMENCLATURE</scope>
</reference>
<reference key="13">
    <citation type="journal article" date="2012" name="PLoS ONE">
        <title>Identification and phylogenetic analysis of Tityus pachyurus and Tityus obscurus novel putative Na+-channel scorpion toxins.</title>
        <authorList>
            <person name="Guerrero-Vargas J.A."/>
            <person name="Mourao C.B."/>
            <person name="Quintero-Hernandez V."/>
            <person name="Possani L.D."/>
            <person name="Schwartz E.F."/>
        </authorList>
    </citation>
    <scope>NOMENCLATURE</scope>
</reference>
<reference key="14">
    <citation type="journal article" date="2016" name="Angew. Chem. Int. Ed.">
        <title>Elucidation of the covalent and tertiary structures of biologically active Ts3 toxin.</title>
        <authorList>
            <person name="Dang B."/>
            <person name="Kubota T."/>
            <person name="Mandal K."/>
            <person name="Correa A.M."/>
            <person name="Bezanilla F."/>
            <person name="Kent S.B."/>
        </authorList>
    </citation>
    <scope>X-RAY CRYSTALLOGRAPHY (1.93 ANGSTROMS) OF 20-83</scope>
    <scope>FUNCTION</scope>
    <scope>DISULFIDE BOND</scope>
    <scope>SYNTHESIS OF 20-81; 20-83; 20-85 AND 20-86</scope>
</reference>
<proteinExistence type="evidence at protein level"/>
<feature type="signal peptide" evidence="3">
    <location>
        <begin position="1"/>
        <end position="19"/>
    </location>
</feature>
<feature type="chain" id="PRO_0000035299" description="Alpha-mammal toxin Ts3" evidence="25 26 27">
    <location>
        <begin position="20"/>
        <end position="83"/>
    </location>
</feature>
<feature type="peptide" id="PRO_0000461720" description="Probable cryptide Ts3[1-14]" evidence="2 24">
    <location>
        <begin position="20"/>
        <end position="33"/>
    </location>
</feature>
<feature type="domain" description="LCN-type CS-alpha/beta" evidence="4">
    <location>
        <begin position="21"/>
        <end position="82"/>
    </location>
</feature>
<feature type="modified residue" description="Serine amide" evidence="1">
    <location>
        <position position="83"/>
    </location>
</feature>
<feature type="disulfide bond" evidence="10 32">
    <location>
        <begin position="31"/>
        <end position="81"/>
    </location>
</feature>
<feature type="disulfide bond" evidence="10 32">
    <location>
        <begin position="35"/>
        <end position="57"/>
    </location>
</feature>
<feature type="disulfide bond" evidence="10 32">
    <location>
        <begin position="43"/>
        <end position="64"/>
    </location>
</feature>
<feature type="disulfide bond" evidence="10 32">
    <location>
        <begin position="47"/>
        <end position="66"/>
    </location>
</feature>
<feature type="sequence conflict" description="In Ref. 4; AAB37719." evidence="24" ref="4">
    <original>L</original>
    <variation>M</variation>
    <location>
        <position position="7"/>
    </location>
</feature>
<feature type="sequence conflict" description="In Ref. 5; AA sequence." evidence="24" ref="5">
    <original>KTNG</original>
    <variation>GST</variation>
    <location>
        <begin position="76"/>
        <end position="79"/>
    </location>
</feature>
<feature type="strand" evidence="33">
    <location>
        <begin position="21"/>
        <end position="23"/>
    </location>
</feature>
<feature type="strand" evidence="33">
    <location>
        <begin position="25"/>
        <end position="27"/>
    </location>
</feature>
<feature type="turn" evidence="33">
    <location>
        <begin position="28"/>
        <end position="30"/>
    </location>
</feature>
<feature type="helix" evidence="33">
    <location>
        <begin position="40"/>
        <end position="49"/>
    </location>
</feature>
<feature type="strand" evidence="33">
    <location>
        <begin position="53"/>
        <end position="58"/>
    </location>
</feature>
<feature type="turn" evidence="33">
    <location>
        <begin position="59"/>
        <end position="62"/>
    </location>
</feature>
<feature type="strand" evidence="33">
    <location>
        <begin position="63"/>
        <end position="69"/>
    </location>
</feature>
<comment type="function">
    <molecule>Alpha-mammal toxin Ts3</molecule>
    <text evidence="5 6 7 9 10">Alpha toxins bind voltage-independently at site-3 of sodium channels (Nav) and inhibit the inactivation of the activated channels, thereby blocking neuronal transmission (PubMed:15051403, PubMed:15249424, PubMed:2536799). This synthetic toxin inhibits inactivation of rat Nav1.4/SCN4A (when tested at 201 nM) (PubMed:27244051). In addition, it has been shown to cause a persistent sodium channel activation in nitrergic inhibitory fibers innervating the rabbit corpus cavernosum, resulting in NO release and cavernosal smooth muscle relaxation (PubMed:12551849). This toxin is active against mammals (PubMed:15051403, PubMed:15249424, PubMed:2536799).</text>
</comment>
<comment type="function">
    <molecule>Probable cryptide Ts3[1-14]</molecule>
    <text evidence="11">this synthetic peptide with a Ser at position 31 (C12S) acts as a bradykinin-potentiating peptide (BPP). Induces endothelium-dependent vasodilation that is reverted by NO synthase inhibitor, suggesting it activates molecular targets on vascular endothelium leading to NO production and vasodilation. It appears to induce vasodilation through muscarinic acetylcholine receptors (AChR) M2 (CHRM2) and M3 (CHRM3). Does not inhibit the angiotensin-converting enzyme (ACE). Does not act via bradykinin B2 receptor.</text>
</comment>
<comment type="subcellular location">
    <subcellularLocation>
        <location evidence="8 12">Secreted</location>
    </subcellularLocation>
</comment>
<comment type="tissue specificity">
    <text evidence="26">Expressed by the venom gland.</text>
</comment>
<comment type="domain">
    <text evidence="10">Has the structural arrangement of an alpha-helix connected to antiparallel beta-sheets by disulfide bonds (CS-alpha/beta).</text>
</comment>
<comment type="mass spectrometry"/>
<comment type="similarity">
    <text evidence="24">Belongs to the long (4 C-C) scorpion toxin superfamily. Sodium channel inhibitor family. Alpha subfamily.</text>
</comment>
<comment type="caution">
    <text evidence="10 21">The longest forms Tityustoxin V (also called Ts V and Ts3(1-66)) and Ts3(1-67) and the shortest form Tityustoxin III (also called Ts III and Ts3(1-62)) show minimal effect on Nav1.4/SCN4A, suggesting that the wild-type toxin corresponds to the amidated 64-residues long peptide (PubMed:27244051, PubMed:8143874).</text>
</comment>
<sequence>MNYFILLVVVCLLTAGTEGKKDGYPVEYDNCAYICWNYDNAYCDKLCKDKKADSGYCYWVHILCYCYGLPDSEPTKTNGKCKSGKK</sequence>
<accession>P01496</accession>
<accession>A0A218QX01</accession>
<accession>P45659</accession>
<accession>P91788</accession>